<keyword id="KW-0072">Autophagy</keyword>
<keyword id="KW-0967">Endosome</keyword>
<keyword id="KW-0325">Glycoprotein</keyword>
<keyword id="KW-0378">Hydrolase</keyword>
<keyword id="KW-0442">Lipid degradation</keyword>
<keyword id="KW-0443">Lipid metabolism</keyword>
<keyword id="KW-0472">Membrane</keyword>
<keyword id="KW-1185">Reference proteome</keyword>
<keyword id="KW-0735">Signal-anchor</keyword>
<keyword id="KW-0812">Transmembrane</keyword>
<keyword id="KW-1133">Transmembrane helix</keyword>
<feature type="chain" id="PRO_0000090363" description="Putative lipase ATG15">
    <location>
        <begin position="1"/>
        <end position="544"/>
    </location>
</feature>
<feature type="topological domain" description="Cytoplasmic" evidence="3">
    <location>
        <begin position="1"/>
        <end position="45"/>
    </location>
</feature>
<feature type="transmembrane region" description="Helical; Signal-anchor for type II membrane protein" evidence="3">
    <location>
        <begin position="46"/>
        <end position="66"/>
    </location>
</feature>
<feature type="topological domain" description="Lumenal" evidence="3">
    <location>
        <begin position="67"/>
        <end position="544"/>
    </location>
</feature>
<feature type="region of interest" description="Disordered" evidence="5">
    <location>
        <begin position="508"/>
        <end position="530"/>
    </location>
</feature>
<feature type="active site" description="Charge relay system" evidence="4">
    <location>
        <position position="362"/>
    </location>
</feature>
<feature type="glycosylation site" description="N-linked (GlcNAc...) asparagine" evidence="3">
    <location>
        <position position="200"/>
    </location>
</feature>
<feature type="glycosylation site" description="N-linked (GlcNAc...) asparagine" evidence="3">
    <location>
        <position position="229"/>
    </location>
</feature>
<feature type="glycosylation site" description="N-linked (GlcNAc...) asparagine" evidence="3">
    <location>
        <position position="234"/>
    </location>
</feature>
<gene>
    <name type="primary">ATG15</name>
    <name type="ordered locus">AAR046C</name>
</gene>
<sequence>MVADFDSGWYEGAGDELGQGARNGVLRERLGGNEKAQVVRSRRKAVAWNVLMVLGLILYVLYSACFAQARQWWRTNGMARGSQAGRFQLVQVHHHGVGAEHATHLVLDVDAEFRKEAAAEYSVFALHGEGQELWPEAGRRRAANPFEYAYALREERATVVRAQQQVPEFMEPYLDFALERPDLAEQIKMDWGYENMFVPNITDKETVISLALMSSNAYVRLPNTGNWRNVTSWNSSVEGDQIHLGWDENGLRAHVFANEDRSVVVLALKGTSSQVLPGSGDDDETSANDKLNDNLLFSCCCARVSYLWTTVCDCYIKSYTCEESCLESELRRKDRYYQAGLDMYKQVLAEFPDASIWLTGHSLGGALASLVARTYGVPAVTFEAPGELLATQRLHLPQPPGLPNQLDTVWHFGHTADPIFMGTCNGASSACSIAGYAMETSCHSGKSCVYDVVNDRGWRVNLLHHRIHTVIDKILDDYDAVAACVPPDICHDCYNWNYVRWRDGTTSPMPSSVASKPTPTPTSPGSPSSTCKGRNWFGYCTEYA</sequence>
<accession>Q75EN3</accession>
<name>ATG15_EREGS</name>
<proteinExistence type="inferred from homology"/>
<reference key="1">
    <citation type="journal article" date="2004" name="Science">
        <title>The Ashbya gossypii genome as a tool for mapping the ancient Saccharomyces cerevisiae genome.</title>
        <authorList>
            <person name="Dietrich F.S."/>
            <person name="Voegeli S."/>
            <person name="Brachat S."/>
            <person name="Lerch A."/>
            <person name="Gates K."/>
            <person name="Steiner S."/>
            <person name="Mohr C."/>
            <person name="Poehlmann R."/>
            <person name="Luedi P."/>
            <person name="Choi S."/>
            <person name="Wing R.A."/>
            <person name="Flavier A."/>
            <person name="Gaffney T.D."/>
            <person name="Philippsen P."/>
        </authorList>
    </citation>
    <scope>NUCLEOTIDE SEQUENCE [LARGE SCALE GENOMIC DNA]</scope>
    <source>
        <strain>ATCC 10895 / CBS 109.51 / FGSC 9923 / NRRL Y-1056</strain>
    </source>
</reference>
<reference key="2">
    <citation type="journal article" date="2013" name="G3 (Bethesda)">
        <title>Genomes of Ashbya fungi isolated from insects reveal four mating-type loci, numerous translocations, lack of transposons, and distinct gene duplications.</title>
        <authorList>
            <person name="Dietrich F.S."/>
            <person name="Voegeli S."/>
            <person name="Kuo S."/>
            <person name="Philippsen P."/>
        </authorList>
    </citation>
    <scope>GENOME REANNOTATION</scope>
    <source>
        <strain>ATCC 10895 / CBS 109.51 / FGSC 9923 / NRRL Y-1056</strain>
    </source>
</reference>
<organism>
    <name type="scientific">Eremothecium gossypii (strain ATCC 10895 / CBS 109.51 / FGSC 9923 / NRRL Y-1056)</name>
    <name type="common">Yeast</name>
    <name type="synonym">Ashbya gossypii</name>
    <dbReference type="NCBI Taxonomy" id="284811"/>
    <lineage>
        <taxon>Eukaryota</taxon>
        <taxon>Fungi</taxon>
        <taxon>Dikarya</taxon>
        <taxon>Ascomycota</taxon>
        <taxon>Saccharomycotina</taxon>
        <taxon>Saccharomycetes</taxon>
        <taxon>Saccharomycetales</taxon>
        <taxon>Saccharomycetaceae</taxon>
        <taxon>Eremothecium</taxon>
    </lineage>
</organism>
<dbReference type="EC" id="3.1.1.3"/>
<dbReference type="EMBL" id="AE016814">
    <property type="protein sequence ID" value="AAS50411.1"/>
    <property type="molecule type" value="Genomic_DNA"/>
</dbReference>
<dbReference type="RefSeq" id="NP_982587.1">
    <property type="nucleotide sequence ID" value="NM_207940.1"/>
</dbReference>
<dbReference type="FunCoup" id="Q75EN3">
    <property type="interactions" value="69"/>
</dbReference>
<dbReference type="STRING" id="284811.Q75EN3"/>
<dbReference type="ESTHER" id="ashgo-q75en3">
    <property type="family name" value="ATG15-related-lipase"/>
</dbReference>
<dbReference type="GlyCosmos" id="Q75EN3">
    <property type="glycosylation" value="3 sites, No reported glycans"/>
</dbReference>
<dbReference type="EnsemblFungi" id="AAS50411">
    <property type="protein sequence ID" value="AAS50411"/>
    <property type="gene ID" value="AGOS_AAR046C"/>
</dbReference>
<dbReference type="GeneID" id="4618494"/>
<dbReference type="KEGG" id="ago:AGOS_AAR046C"/>
<dbReference type="eggNOG" id="KOG4540">
    <property type="taxonomic scope" value="Eukaryota"/>
</dbReference>
<dbReference type="HOGENOM" id="CLU_028295_0_2_1"/>
<dbReference type="InParanoid" id="Q75EN3"/>
<dbReference type="OMA" id="CHDCYNW"/>
<dbReference type="OrthoDB" id="58570at2759"/>
<dbReference type="Proteomes" id="UP000000591">
    <property type="component" value="Chromosome I"/>
</dbReference>
<dbReference type="GO" id="GO:0005783">
    <property type="term" value="C:endoplasmic reticulum"/>
    <property type="evidence" value="ECO:0007669"/>
    <property type="project" value="EnsemblFungi"/>
</dbReference>
<dbReference type="GO" id="GO:0016020">
    <property type="term" value="C:membrane"/>
    <property type="evidence" value="ECO:0000318"/>
    <property type="project" value="GO_Central"/>
</dbReference>
<dbReference type="GO" id="GO:0032585">
    <property type="term" value="C:multivesicular body membrane"/>
    <property type="evidence" value="ECO:0007669"/>
    <property type="project" value="UniProtKB-SubCell"/>
</dbReference>
<dbReference type="GO" id="GO:0005775">
    <property type="term" value="C:vacuolar lumen"/>
    <property type="evidence" value="ECO:0000318"/>
    <property type="project" value="GO_Central"/>
</dbReference>
<dbReference type="GO" id="GO:0005774">
    <property type="term" value="C:vacuolar membrane"/>
    <property type="evidence" value="ECO:0007669"/>
    <property type="project" value="EnsemblFungi"/>
</dbReference>
<dbReference type="GO" id="GO:0004620">
    <property type="term" value="F:phospholipase activity"/>
    <property type="evidence" value="ECO:0000318"/>
    <property type="project" value="GO_Central"/>
</dbReference>
<dbReference type="GO" id="GO:0004806">
    <property type="term" value="F:triacylglycerol lipase activity"/>
    <property type="evidence" value="ECO:0007669"/>
    <property type="project" value="UniProtKB-EC"/>
</dbReference>
<dbReference type="GO" id="GO:0034496">
    <property type="term" value="P:multivesicular body membrane disassembly"/>
    <property type="evidence" value="ECO:0000318"/>
    <property type="project" value="GO_Central"/>
</dbReference>
<dbReference type="GO" id="GO:0046461">
    <property type="term" value="P:neutral lipid catabolic process"/>
    <property type="evidence" value="ECO:0000318"/>
    <property type="project" value="GO_Central"/>
</dbReference>
<dbReference type="GO" id="GO:0000425">
    <property type="term" value="P:pexophagy"/>
    <property type="evidence" value="ECO:0007669"/>
    <property type="project" value="EnsemblFungi"/>
</dbReference>
<dbReference type="GO" id="GO:0006660">
    <property type="term" value="P:phosphatidylserine catabolic process"/>
    <property type="evidence" value="ECO:0000318"/>
    <property type="project" value="GO_Central"/>
</dbReference>
<dbReference type="GO" id="GO:0034727">
    <property type="term" value="P:piecemeal microautophagy of the nucleus"/>
    <property type="evidence" value="ECO:0000318"/>
    <property type="project" value="GO_Central"/>
</dbReference>
<dbReference type="GO" id="GO:0006624">
    <property type="term" value="P:vacuolar protein processing"/>
    <property type="evidence" value="ECO:0007669"/>
    <property type="project" value="EnsemblFungi"/>
</dbReference>
<dbReference type="CDD" id="cd00519">
    <property type="entry name" value="Lipase_3"/>
    <property type="match status" value="1"/>
</dbReference>
<dbReference type="FunFam" id="3.40.50.1820:FF:000339">
    <property type="entry name" value="Lipase, putative"/>
    <property type="match status" value="1"/>
</dbReference>
<dbReference type="Gene3D" id="3.40.50.1820">
    <property type="entry name" value="alpha/beta hydrolase"/>
    <property type="match status" value="1"/>
</dbReference>
<dbReference type="InterPro" id="IPR029058">
    <property type="entry name" value="AB_hydrolase_fold"/>
</dbReference>
<dbReference type="InterPro" id="IPR050805">
    <property type="entry name" value="ATG15_Lipase"/>
</dbReference>
<dbReference type="InterPro" id="IPR002921">
    <property type="entry name" value="Fungal_lipase-type"/>
</dbReference>
<dbReference type="PANTHER" id="PTHR47175">
    <property type="entry name" value="LIPASE ATG15-RELATED"/>
    <property type="match status" value="1"/>
</dbReference>
<dbReference type="PANTHER" id="PTHR47175:SF2">
    <property type="entry name" value="LIPASE ATG15-RELATED"/>
    <property type="match status" value="1"/>
</dbReference>
<dbReference type="Pfam" id="PF01764">
    <property type="entry name" value="Lipase_3"/>
    <property type="match status" value="1"/>
</dbReference>
<dbReference type="SUPFAM" id="SSF53474">
    <property type="entry name" value="alpha/beta-Hydrolases"/>
    <property type="match status" value="1"/>
</dbReference>
<dbReference type="PROSITE" id="PS00120">
    <property type="entry name" value="LIPASE_SER"/>
    <property type="match status" value="1"/>
</dbReference>
<protein>
    <recommendedName>
        <fullName>Putative lipase ATG15</fullName>
        <ecNumber>3.1.1.3</ecNumber>
    </recommendedName>
    <alternativeName>
        <fullName>Autophagy-related protein 15</fullName>
    </alternativeName>
</protein>
<evidence type="ECO:0000250" key="1"/>
<evidence type="ECO:0000250" key="2">
    <source>
        <dbReference type="UniProtKB" id="P25641"/>
    </source>
</evidence>
<evidence type="ECO:0000255" key="3"/>
<evidence type="ECO:0000255" key="4">
    <source>
        <dbReference type="PROSITE-ProRule" id="PRU10037"/>
    </source>
</evidence>
<evidence type="ECO:0000256" key="5">
    <source>
        <dbReference type="SAM" id="MobiDB-lite"/>
    </source>
</evidence>
<evidence type="ECO:0000305" key="6"/>
<comment type="function">
    <text evidence="1">Lipase which is essential for lysis of subvacuolar cytoplasm to vacuole targeted bodies and intravacuolar autophagic bodies. Involved in the lysis of intravacuolar multivesicular body (MVB) vesicles. The intravacuolar membrane disintegration by ATG15 is critical to life span extension (By similarity).</text>
</comment>
<comment type="catalytic activity">
    <reaction>
        <text>a triacylglycerol + H2O = a diacylglycerol + a fatty acid + H(+)</text>
        <dbReference type="Rhea" id="RHEA:12044"/>
        <dbReference type="ChEBI" id="CHEBI:15377"/>
        <dbReference type="ChEBI" id="CHEBI:15378"/>
        <dbReference type="ChEBI" id="CHEBI:17855"/>
        <dbReference type="ChEBI" id="CHEBI:18035"/>
        <dbReference type="ChEBI" id="CHEBI:28868"/>
        <dbReference type="EC" id="3.1.1.3"/>
    </reaction>
</comment>
<comment type="subunit">
    <text evidence="1">Binds to both phosphatidylinositol (PI) and phosphatidylinositol 3,5-bisphosphate (PIP2).</text>
</comment>
<comment type="subcellular location">
    <subcellularLocation>
        <location evidence="2">Endosome</location>
        <location evidence="2">Multivesicular body membrane</location>
        <topology evidence="2">Single-pass type II membrane protein</topology>
    </subcellularLocation>
    <subcellularLocation>
        <location evidence="2">Prevacuolar compartment membrane</location>
        <topology evidence="2">Single-pass type II membrane protein</topology>
    </subcellularLocation>
    <text evidence="2">From ER, targeted to vacuolar lumen at the MVB vesicles via the Golgi and the prevacuolar compartment (PVC).</text>
</comment>
<comment type="similarity">
    <text evidence="6">Belongs to the AB hydrolase superfamily. Lipase family.</text>
</comment>